<name>ZN547_HUMAN</name>
<comment type="function">
    <text>May be involved in transcriptional regulation.</text>
</comment>
<comment type="interaction">
    <interactant intactId="EBI-12895421">
        <id>Q8IVP9</id>
    </interactant>
    <interactant intactId="EBI-11959863">
        <id>Q9NWQ4-1</id>
        <label>GPATCH2L</label>
    </interactant>
    <organismsDiffer>false</organismsDiffer>
    <experiments>3</experiments>
</comment>
<comment type="interaction">
    <interactant intactId="EBI-12895421">
        <id>Q8IVP9</id>
    </interactant>
    <interactant intactId="EBI-746778">
        <id>Q96A72</id>
        <label>MAGOHB</label>
    </interactant>
    <organismsDiffer>false</organismsDiffer>
    <experiments>3</experiments>
</comment>
<comment type="interaction">
    <interactant intactId="EBI-12895421">
        <id>Q8IVP9</id>
    </interactant>
    <interactant intactId="EBI-726739">
        <id>Q9UPY8</id>
        <label>MAPRE3</label>
    </interactant>
    <organismsDiffer>false</organismsDiffer>
    <experiments>3</experiments>
</comment>
<comment type="interaction">
    <interactant intactId="EBI-12895421">
        <id>Q8IVP9</id>
    </interactant>
    <interactant intactId="EBI-11956269">
        <id>Q92824-2</id>
        <label>PCSK5</label>
    </interactant>
    <organismsDiffer>false</organismsDiffer>
    <experiments>3</experiments>
</comment>
<comment type="interaction">
    <interactant intactId="EBI-12895421">
        <id>Q8IVP9</id>
    </interactant>
    <interactant intactId="EBI-1055079">
        <id>O15160</id>
        <label>POLR1C</label>
    </interactant>
    <organismsDiffer>false</organismsDiffer>
    <experiments>3</experiments>
</comment>
<comment type="interaction">
    <interactant intactId="EBI-12895421">
        <id>Q8IVP9</id>
    </interactant>
    <interactant intactId="EBI-748391">
        <id>Q9BWG6</id>
        <label>SCNM1</label>
    </interactant>
    <organismsDiffer>false</organismsDiffer>
    <experiments>3</experiments>
</comment>
<comment type="interaction">
    <interactant intactId="EBI-12895421">
        <id>Q8IVP9</id>
    </interactant>
    <interactant intactId="EBI-10177272">
        <id>P15622-3</id>
        <label>ZNF250</label>
    </interactant>
    <organismsDiffer>false</organismsDiffer>
    <experiments>3</experiments>
</comment>
<comment type="interaction">
    <interactant intactId="EBI-12895421">
        <id>Q8IVP9</id>
    </interactant>
    <interactant intactId="EBI-373456">
        <id>Q9Y3S2</id>
        <label>ZNF330</label>
    </interactant>
    <organismsDiffer>false</organismsDiffer>
    <experiments>5</experiments>
</comment>
<comment type="interaction">
    <interactant intactId="EBI-12895421">
        <id>Q8IVP9</id>
    </interactant>
    <interactant intactId="EBI-740727">
        <id>Q8TAU3</id>
        <label>ZNF417</label>
    </interactant>
    <organismsDiffer>false</organismsDiffer>
    <experiments>3</experiments>
</comment>
<comment type="interaction">
    <interactant intactId="EBI-12895421">
        <id>Q8IVP9</id>
    </interactant>
    <interactant intactId="EBI-6427977">
        <id>Q96SQ5</id>
        <label>ZNF587</label>
    </interactant>
    <organismsDiffer>false</organismsDiffer>
    <experiments>3</experiments>
</comment>
<comment type="subcellular location">
    <subcellularLocation>
        <location evidence="4">Nucleus</location>
    </subcellularLocation>
</comment>
<comment type="alternative products">
    <event type="alternative splicing"/>
    <isoform>
        <id>Q8IVP9-1</id>
        <name>1</name>
        <sequence type="displayed"/>
    </isoform>
    <isoform>
        <id>Q8IVP9-2</id>
        <name>2</name>
        <sequence type="described" ref="VSP_016347 VSP_016348"/>
    </isoform>
</comment>
<comment type="similarity">
    <text evidence="4">Belongs to the krueppel C2H2-type zinc-finger protein family.</text>
</comment>
<comment type="caution">
    <text evidence="4">The gene of ZNF547 share a non-coding exon with TRAPPC2P.</text>
</comment>
<keyword id="KW-0025">Alternative splicing</keyword>
<keyword id="KW-0238">DNA-binding</keyword>
<keyword id="KW-0479">Metal-binding</keyword>
<keyword id="KW-0539">Nucleus</keyword>
<keyword id="KW-1267">Proteomics identification</keyword>
<keyword id="KW-1185">Reference proteome</keyword>
<keyword id="KW-0677">Repeat</keyword>
<keyword id="KW-0804">Transcription</keyword>
<keyword id="KW-0805">Transcription regulation</keyword>
<keyword id="KW-0862">Zinc</keyword>
<keyword id="KW-0863">Zinc-finger</keyword>
<organism>
    <name type="scientific">Homo sapiens</name>
    <name type="common">Human</name>
    <dbReference type="NCBI Taxonomy" id="9606"/>
    <lineage>
        <taxon>Eukaryota</taxon>
        <taxon>Metazoa</taxon>
        <taxon>Chordata</taxon>
        <taxon>Craniata</taxon>
        <taxon>Vertebrata</taxon>
        <taxon>Euteleostomi</taxon>
        <taxon>Mammalia</taxon>
        <taxon>Eutheria</taxon>
        <taxon>Euarchontoglires</taxon>
        <taxon>Primates</taxon>
        <taxon>Haplorrhini</taxon>
        <taxon>Catarrhini</taxon>
        <taxon>Hominidae</taxon>
        <taxon>Homo</taxon>
    </lineage>
</organism>
<proteinExistence type="evidence at protein level"/>
<dbReference type="EMBL" id="AK055662">
    <property type="protein sequence ID" value="BAB70979.1"/>
    <property type="molecule type" value="mRNA"/>
</dbReference>
<dbReference type="EMBL" id="AK291464">
    <property type="protein sequence ID" value="BAF84153.1"/>
    <property type="molecule type" value="mRNA"/>
</dbReference>
<dbReference type="EMBL" id="CH471135">
    <property type="protein sequence ID" value="EAW72497.1"/>
    <property type="molecule type" value="Genomic_DNA"/>
</dbReference>
<dbReference type="EMBL" id="BC042681">
    <property type="protein sequence ID" value="AAH42681.2"/>
    <property type="molecule type" value="mRNA"/>
</dbReference>
<dbReference type="CCDS" id="CCDS33131.1">
    <molecule id="Q8IVP9-1"/>
</dbReference>
<dbReference type="RefSeq" id="NP_775902.2">
    <molecule id="Q8IVP9-1"/>
    <property type="nucleotide sequence ID" value="NM_173631.3"/>
</dbReference>
<dbReference type="SMR" id="Q8IVP9"/>
<dbReference type="BioGRID" id="129822">
    <property type="interactions" value="22"/>
</dbReference>
<dbReference type="FunCoup" id="Q8IVP9">
    <property type="interactions" value="35"/>
</dbReference>
<dbReference type="IntAct" id="Q8IVP9">
    <property type="interactions" value="16"/>
</dbReference>
<dbReference type="iPTMnet" id="Q8IVP9"/>
<dbReference type="PhosphoSitePlus" id="Q8IVP9"/>
<dbReference type="BioMuta" id="ZNF547"/>
<dbReference type="DMDM" id="74762478"/>
<dbReference type="jPOST" id="Q8IVP9"/>
<dbReference type="MassIVE" id="Q8IVP9"/>
<dbReference type="PaxDb" id="9606-ENSP00000282282"/>
<dbReference type="PeptideAtlas" id="Q8IVP9"/>
<dbReference type="ProteomicsDB" id="70751">
    <molecule id="Q8IVP9-1"/>
</dbReference>
<dbReference type="ProteomicsDB" id="70752">
    <molecule id="Q8IVP9-2"/>
</dbReference>
<dbReference type="Antibodypedia" id="19645">
    <property type="antibodies" value="97 antibodies from 18 providers"/>
</dbReference>
<dbReference type="DNASU" id="284306"/>
<dbReference type="Ensembl" id="ENST00000282282.4">
    <molecule id="Q8IVP9-1"/>
    <property type="protein sequence ID" value="ENSP00000282282.3"/>
    <property type="gene ID" value="ENSG00000152433.15"/>
</dbReference>
<dbReference type="GeneID" id="284306"/>
<dbReference type="KEGG" id="hsa:284306"/>
<dbReference type="MANE-Select" id="ENST00000282282.4">
    <property type="protein sequence ID" value="ENSP00000282282.3"/>
    <property type="RefSeq nucleotide sequence ID" value="NM_173631.4"/>
    <property type="RefSeq protein sequence ID" value="NP_775902.2"/>
</dbReference>
<dbReference type="UCSC" id="uc002qol.4">
    <molecule id="Q8IVP9-1"/>
    <property type="organism name" value="human"/>
</dbReference>
<dbReference type="AGR" id="HGNC:26432"/>
<dbReference type="CTD" id="284306"/>
<dbReference type="GeneCards" id="ZNF547"/>
<dbReference type="HGNC" id="HGNC:26432">
    <property type="gene designation" value="ZNF547"/>
</dbReference>
<dbReference type="HPA" id="ENSG00000152433">
    <property type="expression patterns" value="Low tissue specificity"/>
</dbReference>
<dbReference type="neXtProt" id="NX_Q8IVP9"/>
<dbReference type="OpenTargets" id="ENSG00000152433"/>
<dbReference type="PharmGKB" id="PA134931565"/>
<dbReference type="VEuPathDB" id="HostDB:ENSG00000152433"/>
<dbReference type="eggNOG" id="KOG1721">
    <property type="taxonomic scope" value="Eukaryota"/>
</dbReference>
<dbReference type="GeneTree" id="ENSGT00940000164762"/>
<dbReference type="HOGENOM" id="CLU_002678_44_0_1"/>
<dbReference type="InParanoid" id="Q8IVP9"/>
<dbReference type="OMA" id="YMAGKTF"/>
<dbReference type="OrthoDB" id="40579at2759"/>
<dbReference type="PAN-GO" id="Q8IVP9">
    <property type="GO annotations" value="4 GO annotations based on evolutionary models"/>
</dbReference>
<dbReference type="PhylomeDB" id="Q8IVP9"/>
<dbReference type="TreeFam" id="TF337732"/>
<dbReference type="PathwayCommons" id="Q8IVP9"/>
<dbReference type="Reactome" id="R-HSA-212436">
    <property type="pathway name" value="Generic Transcription Pathway"/>
</dbReference>
<dbReference type="Reactome" id="R-HSA-9843940">
    <property type="pathway name" value="Regulation of endogenous retroelements by KRAB-ZFP proteins"/>
</dbReference>
<dbReference type="SignaLink" id="Q8IVP9"/>
<dbReference type="BioGRID-ORCS" id="284306">
    <property type="hits" value="9 hits in 1164 CRISPR screens"/>
</dbReference>
<dbReference type="ChiTaRS" id="ZNF547">
    <property type="organism name" value="human"/>
</dbReference>
<dbReference type="GenomeRNAi" id="284306"/>
<dbReference type="Pharos" id="Q8IVP9">
    <property type="development level" value="Tdark"/>
</dbReference>
<dbReference type="PRO" id="PR:Q8IVP9"/>
<dbReference type="Proteomes" id="UP000005640">
    <property type="component" value="Chromosome 19"/>
</dbReference>
<dbReference type="RNAct" id="Q8IVP9">
    <property type="molecule type" value="protein"/>
</dbReference>
<dbReference type="Bgee" id="ENSG00000152433">
    <property type="expression patterns" value="Expressed in primordial germ cell in gonad and 109 other cell types or tissues"/>
</dbReference>
<dbReference type="ExpressionAtlas" id="Q8IVP9">
    <property type="expression patterns" value="baseline and differential"/>
</dbReference>
<dbReference type="GO" id="GO:0005634">
    <property type="term" value="C:nucleus"/>
    <property type="evidence" value="ECO:0000318"/>
    <property type="project" value="GO_Central"/>
</dbReference>
<dbReference type="GO" id="GO:0000981">
    <property type="term" value="F:DNA-binding transcription factor activity, RNA polymerase II-specific"/>
    <property type="evidence" value="ECO:0000318"/>
    <property type="project" value="GO_Central"/>
</dbReference>
<dbReference type="GO" id="GO:0000978">
    <property type="term" value="F:RNA polymerase II cis-regulatory region sequence-specific DNA binding"/>
    <property type="evidence" value="ECO:0000318"/>
    <property type="project" value="GO_Central"/>
</dbReference>
<dbReference type="GO" id="GO:0008270">
    <property type="term" value="F:zinc ion binding"/>
    <property type="evidence" value="ECO:0007669"/>
    <property type="project" value="UniProtKB-KW"/>
</dbReference>
<dbReference type="GO" id="GO:0006357">
    <property type="term" value="P:regulation of transcription by RNA polymerase II"/>
    <property type="evidence" value="ECO:0000318"/>
    <property type="project" value="GO_Central"/>
</dbReference>
<dbReference type="CDD" id="cd07765">
    <property type="entry name" value="KRAB_A-box"/>
    <property type="match status" value="1"/>
</dbReference>
<dbReference type="FunFam" id="3.30.160.60:FF:001370">
    <property type="entry name" value="Zinc finger protein"/>
    <property type="match status" value="1"/>
</dbReference>
<dbReference type="FunFam" id="3.30.160.60:FF:002343">
    <property type="entry name" value="Zinc finger protein 33A"/>
    <property type="match status" value="1"/>
</dbReference>
<dbReference type="FunFam" id="3.30.160.60:FF:000023">
    <property type="entry name" value="zinc finger protein 37 homolog"/>
    <property type="match status" value="1"/>
</dbReference>
<dbReference type="FunFam" id="3.30.160.60:FF:002004">
    <property type="entry name" value="Zinc finger protein 473"/>
    <property type="match status" value="1"/>
</dbReference>
<dbReference type="FunFam" id="3.30.160.60:FF:000200">
    <property type="entry name" value="zinc finger protein 510 isoform X2"/>
    <property type="match status" value="1"/>
</dbReference>
<dbReference type="FunFam" id="3.30.160.60:FF:001368">
    <property type="entry name" value="Zinc finger protein 547"/>
    <property type="match status" value="1"/>
</dbReference>
<dbReference type="FunFam" id="3.30.160.60:FF:001964">
    <property type="entry name" value="Zinc finger protein 547"/>
    <property type="match status" value="1"/>
</dbReference>
<dbReference type="FunFam" id="3.30.160.60:FF:000281">
    <property type="entry name" value="Zinc finger protein 558 isoform X1"/>
    <property type="match status" value="1"/>
</dbReference>
<dbReference type="FunFam" id="3.30.160.60:FF:001828">
    <property type="entry name" value="Zinc finger protein-interacting with ribonucleoprotein K"/>
    <property type="match status" value="1"/>
</dbReference>
<dbReference type="Gene3D" id="6.10.140.140">
    <property type="match status" value="1"/>
</dbReference>
<dbReference type="Gene3D" id="3.30.160.60">
    <property type="entry name" value="Classic Zinc Finger"/>
    <property type="match status" value="9"/>
</dbReference>
<dbReference type="InterPro" id="IPR001909">
    <property type="entry name" value="KRAB"/>
</dbReference>
<dbReference type="InterPro" id="IPR036051">
    <property type="entry name" value="KRAB_dom_sf"/>
</dbReference>
<dbReference type="InterPro" id="IPR036236">
    <property type="entry name" value="Znf_C2H2_sf"/>
</dbReference>
<dbReference type="InterPro" id="IPR013087">
    <property type="entry name" value="Znf_C2H2_type"/>
</dbReference>
<dbReference type="PANTHER" id="PTHR24399:SF54">
    <property type="entry name" value="GASTRULA ZINC FINGER PROTEIN XLCGF26.1-LIKE-RELATED"/>
    <property type="match status" value="1"/>
</dbReference>
<dbReference type="PANTHER" id="PTHR24399">
    <property type="entry name" value="ZINC FINGER AND BTB DOMAIN-CONTAINING"/>
    <property type="match status" value="1"/>
</dbReference>
<dbReference type="Pfam" id="PF01352">
    <property type="entry name" value="KRAB"/>
    <property type="match status" value="1"/>
</dbReference>
<dbReference type="Pfam" id="PF00096">
    <property type="entry name" value="zf-C2H2"/>
    <property type="match status" value="6"/>
</dbReference>
<dbReference type="Pfam" id="PF13465">
    <property type="entry name" value="zf-H2C2_2"/>
    <property type="match status" value="1"/>
</dbReference>
<dbReference type="SMART" id="SM00349">
    <property type="entry name" value="KRAB"/>
    <property type="match status" value="1"/>
</dbReference>
<dbReference type="SMART" id="SM00355">
    <property type="entry name" value="ZnF_C2H2"/>
    <property type="match status" value="10"/>
</dbReference>
<dbReference type="SUPFAM" id="SSF57667">
    <property type="entry name" value="beta-beta-alpha zinc fingers"/>
    <property type="match status" value="5"/>
</dbReference>
<dbReference type="SUPFAM" id="SSF109640">
    <property type="entry name" value="KRAB domain (Kruppel-associated box)"/>
    <property type="match status" value="1"/>
</dbReference>
<dbReference type="PROSITE" id="PS50805">
    <property type="entry name" value="KRAB"/>
    <property type="match status" value="1"/>
</dbReference>
<dbReference type="PROSITE" id="PS00028">
    <property type="entry name" value="ZINC_FINGER_C2H2_1"/>
    <property type="match status" value="10"/>
</dbReference>
<dbReference type="PROSITE" id="PS50157">
    <property type="entry name" value="ZINC_FINGER_C2H2_2"/>
    <property type="match status" value="9"/>
</dbReference>
<reference key="1">
    <citation type="journal article" date="2004" name="Nat. Genet.">
        <title>Complete sequencing and characterization of 21,243 full-length human cDNAs.</title>
        <authorList>
            <person name="Ota T."/>
            <person name="Suzuki Y."/>
            <person name="Nishikawa T."/>
            <person name="Otsuki T."/>
            <person name="Sugiyama T."/>
            <person name="Irie R."/>
            <person name="Wakamatsu A."/>
            <person name="Hayashi K."/>
            <person name="Sato H."/>
            <person name="Nagai K."/>
            <person name="Kimura K."/>
            <person name="Makita H."/>
            <person name="Sekine M."/>
            <person name="Obayashi M."/>
            <person name="Nishi T."/>
            <person name="Shibahara T."/>
            <person name="Tanaka T."/>
            <person name="Ishii S."/>
            <person name="Yamamoto J."/>
            <person name="Saito K."/>
            <person name="Kawai Y."/>
            <person name="Isono Y."/>
            <person name="Nakamura Y."/>
            <person name="Nagahari K."/>
            <person name="Murakami K."/>
            <person name="Yasuda T."/>
            <person name="Iwayanagi T."/>
            <person name="Wagatsuma M."/>
            <person name="Shiratori A."/>
            <person name="Sudo H."/>
            <person name="Hosoiri T."/>
            <person name="Kaku Y."/>
            <person name="Kodaira H."/>
            <person name="Kondo H."/>
            <person name="Sugawara M."/>
            <person name="Takahashi M."/>
            <person name="Kanda K."/>
            <person name="Yokoi T."/>
            <person name="Furuya T."/>
            <person name="Kikkawa E."/>
            <person name="Omura Y."/>
            <person name="Abe K."/>
            <person name="Kamihara K."/>
            <person name="Katsuta N."/>
            <person name="Sato K."/>
            <person name="Tanikawa M."/>
            <person name="Yamazaki M."/>
            <person name="Ninomiya K."/>
            <person name="Ishibashi T."/>
            <person name="Yamashita H."/>
            <person name="Murakawa K."/>
            <person name="Fujimori K."/>
            <person name="Tanai H."/>
            <person name="Kimata M."/>
            <person name="Watanabe M."/>
            <person name="Hiraoka S."/>
            <person name="Chiba Y."/>
            <person name="Ishida S."/>
            <person name="Ono Y."/>
            <person name="Takiguchi S."/>
            <person name="Watanabe S."/>
            <person name="Yosida M."/>
            <person name="Hotuta T."/>
            <person name="Kusano J."/>
            <person name="Kanehori K."/>
            <person name="Takahashi-Fujii A."/>
            <person name="Hara H."/>
            <person name="Tanase T.-O."/>
            <person name="Nomura Y."/>
            <person name="Togiya S."/>
            <person name="Komai F."/>
            <person name="Hara R."/>
            <person name="Takeuchi K."/>
            <person name="Arita M."/>
            <person name="Imose N."/>
            <person name="Musashino K."/>
            <person name="Yuuki H."/>
            <person name="Oshima A."/>
            <person name="Sasaki N."/>
            <person name="Aotsuka S."/>
            <person name="Yoshikawa Y."/>
            <person name="Matsunawa H."/>
            <person name="Ichihara T."/>
            <person name="Shiohata N."/>
            <person name="Sano S."/>
            <person name="Moriya S."/>
            <person name="Momiyama H."/>
            <person name="Satoh N."/>
            <person name="Takami S."/>
            <person name="Terashima Y."/>
            <person name="Suzuki O."/>
            <person name="Nakagawa S."/>
            <person name="Senoh A."/>
            <person name="Mizoguchi H."/>
            <person name="Goto Y."/>
            <person name="Shimizu F."/>
            <person name="Wakebe H."/>
            <person name="Hishigaki H."/>
            <person name="Watanabe T."/>
            <person name="Sugiyama A."/>
            <person name="Takemoto M."/>
            <person name="Kawakami B."/>
            <person name="Yamazaki M."/>
            <person name="Watanabe K."/>
            <person name="Kumagai A."/>
            <person name="Itakura S."/>
            <person name="Fukuzumi Y."/>
            <person name="Fujimori Y."/>
            <person name="Komiyama M."/>
            <person name="Tashiro H."/>
            <person name="Tanigami A."/>
            <person name="Fujiwara T."/>
            <person name="Ono T."/>
            <person name="Yamada K."/>
            <person name="Fujii Y."/>
            <person name="Ozaki K."/>
            <person name="Hirao M."/>
            <person name="Ohmori Y."/>
            <person name="Kawabata A."/>
            <person name="Hikiji T."/>
            <person name="Kobatake N."/>
            <person name="Inagaki H."/>
            <person name="Ikema Y."/>
            <person name="Okamoto S."/>
            <person name="Okitani R."/>
            <person name="Kawakami T."/>
            <person name="Noguchi S."/>
            <person name="Itoh T."/>
            <person name="Shigeta K."/>
            <person name="Senba T."/>
            <person name="Matsumura K."/>
            <person name="Nakajima Y."/>
            <person name="Mizuno T."/>
            <person name="Morinaga M."/>
            <person name="Sasaki M."/>
            <person name="Togashi T."/>
            <person name="Oyama M."/>
            <person name="Hata H."/>
            <person name="Watanabe M."/>
            <person name="Komatsu T."/>
            <person name="Mizushima-Sugano J."/>
            <person name="Satoh T."/>
            <person name="Shirai Y."/>
            <person name="Takahashi Y."/>
            <person name="Nakagawa K."/>
            <person name="Okumura K."/>
            <person name="Nagase T."/>
            <person name="Nomura N."/>
            <person name="Kikuchi H."/>
            <person name="Masuho Y."/>
            <person name="Yamashita R."/>
            <person name="Nakai K."/>
            <person name="Yada T."/>
            <person name="Nakamura Y."/>
            <person name="Ohara O."/>
            <person name="Isogai T."/>
            <person name="Sugano S."/>
        </authorList>
    </citation>
    <scope>NUCLEOTIDE SEQUENCE [LARGE SCALE MRNA] (ISOFORMS 1 AND 2)</scope>
    <source>
        <tissue>Brain</tissue>
        <tissue>Neuroblastoma</tissue>
    </source>
</reference>
<reference key="2">
    <citation type="submission" date="2005-07" db="EMBL/GenBank/DDBJ databases">
        <authorList>
            <person name="Mural R.J."/>
            <person name="Istrail S."/>
            <person name="Sutton G.G."/>
            <person name="Florea L."/>
            <person name="Halpern A.L."/>
            <person name="Mobarry C.M."/>
            <person name="Lippert R."/>
            <person name="Walenz B."/>
            <person name="Shatkay H."/>
            <person name="Dew I."/>
            <person name="Miller J.R."/>
            <person name="Flanigan M.J."/>
            <person name="Edwards N.J."/>
            <person name="Bolanos R."/>
            <person name="Fasulo D."/>
            <person name="Halldorsson B.V."/>
            <person name="Hannenhalli S."/>
            <person name="Turner R."/>
            <person name="Yooseph S."/>
            <person name="Lu F."/>
            <person name="Nusskern D.R."/>
            <person name="Shue B.C."/>
            <person name="Zheng X.H."/>
            <person name="Zhong F."/>
            <person name="Delcher A.L."/>
            <person name="Huson D.H."/>
            <person name="Kravitz S.A."/>
            <person name="Mouchard L."/>
            <person name="Reinert K."/>
            <person name="Remington K.A."/>
            <person name="Clark A.G."/>
            <person name="Waterman M.S."/>
            <person name="Eichler E.E."/>
            <person name="Adams M.D."/>
            <person name="Hunkapiller M.W."/>
            <person name="Myers E.W."/>
            <person name="Venter J.C."/>
        </authorList>
    </citation>
    <scope>NUCLEOTIDE SEQUENCE [LARGE SCALE GENOMIC DNA]</scope>
</reference>
<reference key="3">
    <citation type="journal article" date="2004" name="Genome Res.">
        <title>The status, quality, and expansion of the NIH full-length cDNA project: the Mammalian Gene Collection (MGC).</title>
        <authorList>
            <consortium name="The MGC Project Team"/>
        </authorList>
    </citation>
    <scope>NUCLEOTIDE SEQUENCE [LARGE SCALE MRNA] (ISOFORM 1)</scope>
    <source>
        <tissue>Testis</tissue>
    </source>
</reference>
<accession>Q8IVP9</accession>
<accession>A8K5Z9</accession>
<accession>Q96NC4</accession>
<evidence type="ECO:0000255" key="1">
    <source>
        <dbReference type="PROSITE-ProRule" id="PRU00042"/>
    </source>
</evidence>
<evidence type="ECO:0000255" key="2">
    <source>
        <dbReference type="PROSITE-ProRule" id="PRU00119"/>
    </source>
</evidence>
<evidence type="ECO:0000303" key="3">
    <source>
    </source>
</evidence>
<evidence type="ECO:0000305" key="4"/>
<sequence length="402" mass="45956">MAEMNPAQGHVVFEDVAIYFSQEEWGHLDEAQRLLYRDVMLENLALLSSLGCCHGAEDEEAPLEPGVSVGVSQVMAPKPCLSTQNTQPCETCSSLLKDILRLAEHDGTHPEQGLYTCPAHLHQHQKEQIREKLSRGDGGRPTFVKNHRVHMAGKTFLCSECGKAFSHKHKLSDHQKIHTGERTYKCSKCGILFMERSTLNRHQRTHTGERPYECNECGKAFLCKSHLVRHQTIHSGERPYECSECGKLFMWSSTLITHQRVHTGKRPYGCSECGKFFKCNSNLFRHYRIHTGKRSYGCSECGKFFMERSTLSRHQRVHTGERPYECNECGKFFSLKSVLIQHQRVHTGERPYECSECGKAFLTKSHLICHQTVHTAAKQCSECGKFFRYNSTLLRHQKVHTG</sequence>
<protein>
    <recommendedName>
        <fullName>Zinc finger protein 547</fullName>
    </recommendedName>
</protein>
<gene>
    <name type="primary">ZNF547</name>
</gene>
<feature type="chain" id="PRO_0000047644" description="Zinc finger protein 547">
    <location>
        <begin position="1"/>
        <end position="402"/>
    </location>
</feature>
<feature type="domain" description="KRAB" evidence="2">
    <location>
        <begin position="11"/>
        <end position="82"/>
    </location>
</feature>
<feature type="zinc finger region" description="C2H2-type 1" evidence="1">
    <location>
        <begin position="87"/>
        <end position="109"/>
    </location>
</feature>
<feature type="zinc finger region" description="C2H2-type 2" evidence="1">
    <location>
        <begin position="156"/>
        <end position="178"/>
    </location>
</feature>
<feature type="zinc finger region" description="C2H2-type 3" evidence="1">
    <location>
        <begin position="184"/>
        <end position="206"/>
    </location>
</feature>
<feature type="zinc finger region" description="C2H2-type 4" evidence="1">
    <location>
        <begin position="212"/>
        <end position="234"/>
    </location>
</feature>
<feature type="zinc finger region" description="C2H2-type 5" evidence="1">
    <location>
        <begin position="240"/>
        <end position="262"/>
    </location>
</feature>
<feature type="zinc finger region" description="C2H2-type 6" evidence="1">
    <location>
        <begin position="268"/>
        <end position="290"/>
    </location>
</feature>
<feature type="zinc finger region" description="C2H2-type 7" evidence="1">
    <location>
        <begin position="296"/>
        <end position="318"/>
    </location>
</feature>
<feature type="zinc finger region" description="C2H2-type 8" evidence="1">
    <location>
        <begin position="324"/>
        <end position="346"/>
    </location>
</feature>
<feature type="zinc finger region" description="C2H2-type 9" evidence="1">
    <location>
        <begin position="352"/>
        <end position="374"/>
    </location>
</feature>
<feature type="zinc finger region" description="C2H2-type 10" evidence="1">
    <location>
        <begin position="378"/>
        <end position="400"/>
    </location>
</feature>
<feature type="splice variant" id="VSP_016347" description="In isoform 2." evidence="3">
    <original>HTGERPYE</original>
    <variation>YTEEESFQ</variation>
    <location>
        <begin position="346"/>
        <end position="353"/>
    </location>
</feature>
<feature type="splice variant" id="VSP_016348" description="In isoform 2." evidence="3">
    <location>
        <begin position="354"/>
        <end position="402"/>
    </location>
</feature>